<organismHost>
    <name type="scientific">Homo sapiens</name>
    <name type="common">Human</name>
    <dbReference type="NCBI Taxonomy" id="9606"/>
</organismHost>
<accession>P20886</accession>
<organism>
    <name type="scientific">Human immunodeficiency virus type 1 group M subtype B (isolate OYI)</name>
    <name type="common">HIV-1</name>
    <dbReference type="NCBI Taxonomy" id="11699"/>
    <lineage>
        <taxon>Viruses</taxon>
        <taxon>Riboviria</taxon>
        <taxon>Pararnavirae</taxon>
        <taxon>Artverviricota</taxon>
        <taxon>Revtraviricetes</taxon>
        <taxon>Ortervirales</taxon>
        <taxon>Retroviridae</taxon>
        <taxon>Orthoretrovirinae</taxon>
        <taxon>Lentivirus</taxon>
        <taxon>Human immunodeficiency virus type 1</taxon>
    </lineage>
</organism>
<proteinExistence type="inferred from homology"/>
<evidence type="ECO:0000255" key="1">
    <source>
        <dbReference type="HAMAP-Rule" id="MF_04078"/>
    </source>
</evidence>
<comment type="function">
    <text evidence="1">Factor of infectivity and pathogenicity, required for optimal virus replication. Alters numerous pathways of T-lymphocyte function and down-regulates immunity surface molecules in order to evade host defense and increase viral infectivity. Alters the functionality of other immunity cells, like dendritic cells, monocytes/macrophages and NK cells.</text>
</comment>
<comment type="function">
    <text evidence="1">In infected CD4(+) T-lymphocytes, down-regulates the surface MHC-I, mature MHC-II, CD4, CD28, CCR5 and CXCR4 molecules. Mediates internalization and degradation of host CD4 through the interaction of with the cytoplasmic tail of CD4, the recruitment of AP-2 (clathrin adapter protein complex 2), internalization through clathrin coated pits, and subsequent transport to endosomes and lysosomes for degradation. Diverts host MHC-I molecules to the trans-Golgi network-associated endosomal compartments by an endocytic pathway to finally target them for degradation. MHC-I down-regulation may involve AP-1 (clathrin adapter protein complex 1) or possibly Src family kinase-ZAP70/Syk-PI3K cascade recruited by PACS2. In consequence infected cells are masked for immune recognition by cytotoxic T-lymphocytes. Decreasing the number of immune receptors also prevents reinfection by more HIV particles (superinfection). Down-regulates host SERINC3 and SERINC5 thereby excluding these proteins from the viral particles. Virion infectivity is drastically higher when SERINC3 or SERINC5 are excluded from the viral envelope, because these host antiviral proteins impair the membrane fusion event necessary for subsequent virion penetration.</text>
</comment>
<comment type="function">
    <text evidence="1">Bypasses host T-cell signaling by inducing a transcriptional program nearly identical to that of anti-CD3 cell activation. Interaction with TCR-zeta chain up-regulates the Fas ligand (FasL). Increasing surface FasL molecules and decreasing surface MHC-I molecules on infected CD4(+) cells send attacking cytotoxic CD8+ T-lymphocytes into apoptosis.</text>
</comment>
<comment type="function">
    <text evidence="1">Plays a role in optimizing the host cell environment for viral replication without causing cell death by apoptosis. Protects the infected cells from apoptosis in order to keep them alive until the next virus generation is ready to strike. Inhibits the Fas and TNFR-mediated death signals by blocking MAP3K5/ASK1. Decreases the half-life of TP53, protecting the infected cell against p53-mediated apoptosis. Inhibits the apoptotic signals regulated by the Bcl-2 family proteins through the formation of a Nef/PI3-kinase/PAK2 complex that leads to activation of PAK2 and induces phosphorylation of host BAD.</text>
</comment>
<comment type="function">
    <text evidence="1">Extracellular Nef protein targets CD4(+) T-lymphocytes for apoptosis by interacting with CXCR4 surface receptors.</text>
</comment>
<comment type="subunit">
    <text evidence="1">Monomer; cytosolic form. Homodimer; membrane bound form. Interacts with Nef associated p21-activated kinase (PAK2); this interaction activates PAK2. Associates with the Nef-MHC-I-AP1 complex; this complex is required for MHC-I internalization. Interacts (via C-terminus) with host PI3-kinase. Interacts with host PACS1; this interaction seems to be weak. Interacts with host PACS2. Interacts with host LCK and MAPK3; these interactions inhibit the kinase activity of the latter. Interacts with host ATP6V1H; this interaction may play a role in CD4 endocytosis. Associates with the CD4-Nef-AP2 complex; this complex is required for CD4 internalization. Interacts with host AP2 subunit alpha and AP2 subunit sigma2. Interacts with TCR-zeta chain; this interaction up-regulates the Fas ligand (FasL) surface expression. Interacts with host HCK, LYN, and SRC; these interactions activate the Src family kinases. Interacts with MAP3K5; this interaction inhibits the Fas and TNFR-mediated death signals. Interacts with beta-COP and PTE1. Interacts with human RACK1; this increases Nef phosphorylation by PKC. Interacts with TP53; this interaction decreases the half-life of TP53, protecting the infected cell against p53-mediated apoptosis.</text>
</comment>
<comment type="subcellular location">
    <subcellularLocation>
        <location evidence="1">Host cell membrane</location>
        <topology evidence="1">Lipid-anchor</topology>
        <orientation evidence="1">Cytoplasmic side</orientation>
    </subcellularLocation>
    <subcellularLocation>
        <location evidence="1">Virion</location>
    </subcellularLocation>
    <subcellularLocation>
        <location evidence="1">Secreted</location>
    </subcellularLocation>
    <subcellularLocation>
        <location evidence="1">Host Golgi apparatus membrane</location>
    </subcellularLocation>
    <text evidence="1">TGN localization requires PACS1. Associates with the inner plasma membrane through its N-terminal domain. Nef stimulates its own export via the release of exosomes. Incorporated in virions at a rate of about 10 molecules per virion, where it is cleaved.</text>
</comment>
<comment type="induction">
    <text evidence="1">Expressed early in the viral replication cycle.</text>
</comment>
<comment type="domain">
    <text evidence="1">The N-terminal domain is composed of the N-myristoyl glycine and of a cluster of positively charged amino acids. It is required for inner plasma membrane targeting of Nef and virion incorporation, and thereby for infectivity. This domain is also involved in binding to TP53.</text>
</comment>
<comment type="domain">
    <text evidence="1">The SH3-binding domain constituted of PxxP motifs mediates binding to several Src family proteins thereby regulating their tyrosine kinase activity. The same motifs also mediates the association with MAPK3, PI3-kinase and TCR-zeta.</text>
</comment>
<comment type="domain">
    <text evidence="1">The dileucine internalization motif and a diacidic motif seem to be required for binding to AP-2.</text>
</comment>
<comment type="domain">
    <text evidence="1">The acidic region binds to the sorting protein PACS-2, which targets Nef to the paranuclear region, enabling the PxxP motif to direct assembly of an SFK/ZAP-70/PI3K complex that accelerates endocytosis of cell-surface MHC-I.</text>
</comment>
<comment type="PTM">
    <text evidence="1">The virion-associated Nef proteins are cleaved by the viral protease to release the soluble C-terminal core protein. Nef is probably cleaved concomitantly with viral structural proteins on maturation of virus particles.</text>
</comment>
<comment type="PTM">
    <text evidence="1">Myristoylated.</text>
</comment>
<comment type="PTM">
    <text evidence="1">Phosphorylated on serine residues, probably by host PKCdelta and theta.</text>
</comment>
<comment type="miscellaneous">
    <text evidence="1">HIV-1 lineages are divided in three main groups, M (for Major), O (for Outlier), and N (for New, or Non-M, Non-O). The vast majority of strains found worldwide belong to the group M. Group O seems to be endemic to and largely confined to Cameroon and neighboring countries in West Central Africa, where these viruses represent a small minority of HIV-1 strains. The group N is represented by a limited number of isolates from Cameroonian persons. The group M is further subdivided in 9 clades or subtypes (A to D, F to H, J and K).</text>
</comment>
<comment type="similarity">
    <text evidence="1">Belongs to the lentivirus primate group Nef protein family.</text>
</comment>
<keyword id="KW-0014">AIDS</keyword>
<keyword id="KW-0053">Apoptosis</keyword>
<keyword id="KW-0244">Early protein</keyword>
<keyword id="KW-1032">Host cell membrane</keyword>
<keyword id="KW-1040">Host Golgi apparatus</keyword>
<keyword id="KW-1043">Host membrane</keyword>
<keyword id="KW-0945">Host-virus interaction</keyword>
<keyword id="KW-1080">Inhibition of host adaptive immune response by virus</keyword>
<keyword id="KW-1083">Inhibition of host autophagy by virus</keyword>
<keyword id="KW-1115">Inhibition of host MHC class I molecule presentation by virus</keyword>
<keyword id="KW-1116">Inhibition of host MHC class II molecule presentation by virus</keyword>
<keyword id="KW-0449">Lipoprotein</keyword>
<keyword id="KW-0472">Membrane</keyword>
<keyword id="KW-0519">Myristate</keyword>
<keyword id="KW-0597">Phosphoprotein</keyword>
<keyword id="KW-0964">Secreted</keyword>
<keyword id="KW-0729">SH3-binding</keyword>
<keyword id="KW-0899">Viral immunoevasion</keyword>
<keyword id="KW-0946">Virion</keyword>
<keyword id="KW-0843">Virulence</keyword>
<name>NEF_HV1OY</name>
<gene>
    <name evidence="1" type="primary">nef</name>
</gene>
<feature type="initiator methionine" description="Removed; by host" evidence="1">
    <location>
        <position position="1"/>
    </location>
</feature>
<feature type="chain" id="PRO_0000038355" description="Protein Nef" evidence="1">
    <location>
        <begin position="2"/>
        <end position="211"/>
    </location>
</feature>
<feature type="chain" id="PRO_0000038356" description="C-terminal core protein" evidence="1">
    <location>
        <begin position="63"/>
        <end position="211"/>
    </location>
</feature>
<feature type="region of interest" description="Acidic; interacts with host PACS1 and PACS2; stabilizes the interaction of NEF/MHC-I with host AP1M1; necessary for MHC-I internalization" evidence="1">
    <location>
        <begin position="67"/>
        <end position="70"/>
    </location>
</feature>
<feature type="region of interest" description="SH3-binding; interaction with Src family tyrosine kinases" evidence="1">
    <location>
        <begin position="74"/>
        <end position="83"/>
    </location>
</feature>
<feature type="region of interest" description="Mediates dimerization, Nef-PTE1 interaction" evidence="1">
    <location>
        <begin position="113"/>
        <end position="129"/>
    </location>
</feature>
<feature type="region of interest" description="Binding to ATP6V1H" evidence="1">
    <location>
        <begin position="153"/>
        <end position="185"/>
    </location>
</feature>
<feature type="short sequence motif" description="PxxP; stabilizes the interaction of NEF/MHC-I with host AP1M1; necessary for MHC-I internalization" evidence="1">
    <location>
        <begin position="77"/>
        <end position="80"/>
    </location>
</feature>
<feature type="short sequence motif" description="Dileucine internalization motif; necessary for CD4 internalization" evidence="1">
    <location>
        <begin position="169"/>
        <end position="170"/>
    </location>
</feature>
<feature type="short sequence motif" description="Diacidic; necessary for CD4 internalization" evidence="1">
    <location>
        <begin position="179"/>
        <end position="180"/>
    </location>
</feature>
<feature type="site" description="Might play a role in AP-1 recruitment to the Nef-MHC-I complex" evidence="1">
    <location>
        <position position="20"/>
    </location>
</feature>
<feature type="site" description="Cleavage; by viral protease" evidence="1">
    <location>
        <begin position="62"/>
        <end position="63"/>
    </location>
</feature>
<feature type="modified residue" description="Phosphoserine; by host" evidence="1">
    <location>
        <position position="6"/>
    </location>
</feature>
<feature type="lipid moiety-binding region" description="N-myristoyl glycine; by host" evidence="1">
    <location>
        <position position="2"/>
    </location>
</feature>
<protein>
    <recommendedName>
        <fullName evidence="1">Protein Nef</fullName>
    </recommendedName>
    <alternativeName>
        <fullName evidence="1">3'ORF</fullName>
    </alternativeName>
    <alternativeName>
        <fullName evidence="1">Negative factor</fullName>
        <shortName evidence="1">F-protein</shortName>
    </alternativeName>
    <component>
        <recommendedName>
            <fullName evidence="1">C-terminal core protein</fullName>
        </recommendedName>
    </component>
</protein>
<reference key="1">
    <citation type="journal article" date="1989" name="AIDS">
        <title>A highly defective HIV-1 strain isolated from a healthy Gabonese individual presenting an atypical western blot.</title>
        <authorList>
            <person name="Huet T."/>
            <person name="Dazza M.C."/>
            <person name="Brun-Vezinet F."/>
            <person name="Roelants G.E."/>
            <person name="Wain-Hobson S."/>
        </authorList>
    </citation>
    <scope>NUCLEOTIDE SEQUENCE [GENOMIC RNA]</scope>
</reference>
<sequence>MGGKWSKCSMKGWPTIRERMKRAELQPPEPAAEGVGAASRDLEKHGAITSSNTAATNADCAWLEAQEDEEVGFPVRPQVPLRPMTYKGALDLSHFLKEKGGLEGLIYSQKRQDILDLWVYHTQGYFPDWQNYTPGPGIRYPLCFGWCFKLVPMDPDQVEEANEGENNSLLHPISLHGMDDPEKEVLVWKFDSRLAFRHMAREVHPEYYKDC</sequence>
<dbReference type="EMBL" id="M26727">
    <property type="protein sequence ID" value="AAA83398.1"/>
    <property type="molecule type" value="Genomic_RNA"/>
</dbReference>
<dbReference type="SMR" id="P20886"/>
<dbReference type="Proteomes" id="UP000121275">
    <property type="component" value="Genome"/>
</dbReference>
<dbReference type="GO" id="GO:0005576">
    <property type="term" value="C:extracellular region"/>
    <property type="evidence" value="ECO:0007669"/>
    <property type="project" value="UniProtKB-SubCell"/>
</dbReference>
<dbReference type="GO" id="GO:0044178">
    <property type="term" value="C:host cell Golgi membrane"/>
    <property type="evidence" value="ECO:0007669"/>
    <property type="project" value="UniProtKB-SubCell"/>
</dbReference>
<dbReference type="GO" id="GO:0020002">
    <property type="term" value="C:host cell plasma membrane"/>
    <property type="evidence" value="ECO:0007669"/>
    <property type="project" value="UniProtKB-SubCell"/>
</dbReference>
<dbReference type="GO" id="GO:0016020">
    <property type="term" value="C:membrane"/>
    <property type="evidence" value="ECO:0007669"/>
    <property type="project" value="UniProtKB-UniRule"/>
</dbReference>
<dbReference type="GO" id="GO:0044423">
    <property type="term" value="C:virion component"/>
    <property type="evidence" value="ECO:0007669"/>
    <property type="project" value="UniProtKB-UniRule"/>
</dbReference>
<dbReference type="GO" id="GO:0005525">
    <property type="term" value="F:GTP binding"/>
    <property type="evidence" value="ECO:0007669"/>
    <property type="project" value="UniProtKB-UniRule"/>
</dbReference>
<dbReference type="GO" id="GO:0017124">
    <property type="term" value="F:SH3 domain binding"/>
    <property type="evidence" value="ECO:0007669"/>
    <property type="project" value="UniProtKB-UniRule"/>
</dbReference>
<dbReference type="GO" id="GO:0046776">
    <property type="term" value="P:symbiont-mediated suppression of host antigen processing and presentation of peptide antigen via MHC class I"/>
    <property type="evidence" value="ECO:0007669"/>
    <property type="project" value="UniProtKB-UniRule"/>
</dbReference>
<dbReference type="GO" id="GO:0039505">
    <property type="term" value="P:symbiont-mediated suppression of host antigen processing and presentation of peptide antigen via MHC class II"/>
    <property type="evidence" value="ECO:0007669"/>
    <property type="project" value="UniProtKB-UniRule"/>
</dbReference>
<dbReference type="GO" id="GO:0140321">
    <property type="term" value="P:symbiont-mediated suppression of host autophagy"/>
    <property type="evidence" value="ECO:0007669"/>
    <property type="project" value="UniProtKB-KW"/>
</dbReference>
<dbReference type="FunFam" id="3.30.62.10:FF:000001">
    <property type="entry name" value="Protein Nef"/>
    <property type="match status" value="1"/>
</dbReference>
<dbReference type="Gene3D" id="4.10.890.10">
    <property type="entry name" value="HIV 1 nef anchor domain"/>
    <property type="match status" value="1"/>
</dbReference>
<dbReference type="Gene3D" id="3.30.62.10">
    <property type="entry name" value="Nef Regulatory Factor"/>
    <property type="match status" value="1"/>
</dbReference>
<dbReference type="HAMAP" id="MF_04078">
    <property type="entry name" value="NEF_HIV"/>
    <property type="match status" value="1"/>
</dbReference>
<dbReference type="InterPro" id="IPR027480">
    <property type="entry name" value="HIV-1_Nef_anchor_sf"/>
</dbReference>
<dbReference type="InterPro" id="IPR027481">
    <property type="entry name" value="HIV-1_Nef_core_sf"/>
</dbReference>
<dbReference type="InterPro" id="IPR001558">
    <property type="entry name" value="HIV_Nef"/>
</dbReference>
<dbReference type="Pfam" id="PF00469">
    <property type="entry name" value="F-protein"/>
    <property type="match status" value="1"/>
</dbReference>
<dbReference type="SUPFAM" id="SSF55671">
    <property type="entry name" value="Regulatory factor Nef"/>
    <property type="match status" value="1"/>
</dbReference>